<protein>
    <recommendedName>
        <fullName evidence="1">Proline--tRNA ligase</fullName>
        <ecNumber evidence="1">6.1.1.15</ecNumber>
    </recommendedName>
    <alternativeName>
        <fullName evidence="1">Prolyl-tRNA synthetase</fullName>
        <shortName evidence="1">ProRS</shortName>
    </alternativeName>
</protein>
<dbReference type="EC" id="6.1.1.15" evidence="1"/>
<dbReference type="EMBL" id="BX571965">
    <property type="protein sequence ID" value="CAH37009.1"/>
    <property type="molecule type" value="Genomic_DNA"/>
</dbReference>
<dbReference type="RefSeq" id="WP_004194217.1">
    <property type="nucleotide sequence ID" value="NZ_CP009538.1"/>
</dbReference>
<dbReference type="RefSeq" id="YP_109593.1">
    <property type="nucleotide sequence ID" value="NC_006350.1"/>
</dbReference>
<dbReference type="SMR" id="Q63QM5"/>
<dbReference type="STRING" id="272560.BPSL2998"/>
<dbReference type="KEGG" id="bps:BPSL2998"/>
<dbReference type="PATRIC" id="fig|272560.51.peg.2272"/>
<dbReference type="eggNOG" id="COG0442">
    <property type="taxonomic scope" value="Bacteria"/>
</dbReference>
<dbReference type="Proteomes" id="UP000000605">
    <property type="component" value="Chromosome 1"/>
</dbReference>
<dbReference type="GO" id="GO:0005829">
    <property type="term" value="C:cytosol"/>
    <property type="evidence" value="ECO:0007669"/>
    <property type="project" value="TreeGrafter"/>
</dbReference>
<dbReference type="GO" id="GO:0002161">
    <property type="term" value="F:aminoacyl-tRNA deacylase activity"/>
    <property type="evidence" value="ECO:0007669"/>
    <property type="project" value="InterPro"/>
</dbReference>
<dbReference type="GO" id="GO:0005524">
    <property type="term" value="F:ATP binding"/>
    <property type="evidence" value="ECO:0007669"/>
    <property type="project" value="UniProtKB-UniRule"/>
</dbReference>
<dbReference type="GO" id="GO:0004827">
    <property type="term" value="F:proline-tRNA ligase activity"/>
    <property type="evidence" value="ECO:0007669"/>
    <property type="project" value="UniProtKB-UniRule"/>
</dbReference>
<dbReference type="GO" id="GO:0006433">
    <property type="term" value="P:prolyl-tRNA aminoacylation"/>
    <property type="evidence" value="ECO:0007669"/>
    <property type="project" value="UniProtKB-UniRule"/>
</dbReference>
<dbReference type="CDD" id="cd04334">
    <property type="entry name" value="ProRS-INS"/>
    <property type="match status" value="1"/>
</dbReference>
<dbReference type="CDD" id="cd00861">
    <property type="entry name" value="ProRS_anticodon_short"/>
    <property type="match status" value="1"/>
</dbReference>
<dbReference type="CDD" id="cd00779">
    <property type="entry name" value="ProRS_core_prok"/>
    <property type="match status" value="1"/>
</dbReference>
<dbReference type="FunFam" id="3.30.930.10:FF:000043">
    <property type="entry name" value="Proline--tRNA ligase"/>
    <property type="match status" value="1"/>
</dbReference>
<dbReference type="FunFam" id="3.30.930.10:FF:000097">
    <property type="entry name" value="Proline--tRNA ligase"/>
    <property type="match status" value="1"/>
</dbReference>
<dbReference type="Gene3D" id="3.40.50.800">
    <property type="entry name" value="Anticodon-binding domain"/>
    <property type="match status" value="1"/>
</dbReference>
<dbReference type="Gene3D" id="3.30.930.10">
    <property type="entry name" value="Bira Bifunctional Protein, Domain 2"/>
    <property type="match status" value="2"/>
</dbReference>
<dbReference type="Gene3D" id="3.90.960.10">
    <property type="entry name" value="YbaK/aminoacyl-tRNA synthetase-associated domain"/>
    <property type="match status" value="1"/>
</dbReference>
<dbReference type="HAMAP" id="MF_01569">
    <property type="entry name" value="Pro_tRNA_synth_type1"/>
    <property type="match status" value="1"/>
</dbReference>
<dbReference type="InterPro" id="IPR002314">
    <property type="entry name" value="aa-tRNA-synt_IIb"/>
</dbReference>
<dbReference type="InterPro" id="IPR006195">
    <property type="entry name" value="aa-tRNA-synth_II"/>
</dbReference>
<dbReference type="InterPro" id="IPR045864">
    <property type="entry name" value="aa-tRNA-synth_II/BPL/LPL"/>
</dbReference>
<dbReference type="InterPro" id="IPR004154">
    <property type="entry name" value="Anticodon-bd"/>
</dbReference>
<dbReference type="InterPro" id="IPR036621">
    <property type="entry name" value="Anticodon-bd_dom_sf"/>
</dbReference>
<dbReference type="InterPro" id="IPR002316">
    <property type="entry name" value="Pro-tRNA-ligase_IIa"/>
</dbReference>
<dbReference type="InterPro" id="IPR004500">
    <property type="entry name" value="Pro-tRNA-synth_IIa_bac-type"/>
</dbReference>
<dbReference type="InterPro" id="IPR023717">
    <property type="entry name" value="Pro-tRNA-Synthase_IIa_type1"/>
</dbReference>
<dbReference type="InterPro" id="IPR050062">
    <property type="entry name" value="Pro-tRNA_synthetase"/>
</dbReference>
<dbReference type="InterPro" id="IPR044140">
    <property type="entry name" value="ProRS_anticodon_short"/>
</dbReference>
<dbReference type="InterPro" id="IPR033730">
    <property type="entry name" value="ProRS_core_prok"/>
</dbReference>
<dbReference type="InterPro" id="IPR036754">
    <property type="entry name" value="YbaK/aa-tRNA-synt-asso_dom_sf"/>
</dbReference>
<dbReference type="InterPro" id="IPR007214">
    <property type="entry name" value="YbaK/aa-tRNA-synth-assoc-dom"/>
</dbReference>
<dbReference type="NCBIfam" id="NF006625">
    <property type="entry name" value="PRK09194.1"/>
    <property type="match status" value="1"/>
</dbReference>
<dbReference type="NCBIfam" id="TIGR00409">
    <property type="entry name" value="proS_fam_II"/>
    <property type="match status" value="1"/>
</dbReference>
<dbReference type="PANTHER" id="PTHR42753">
    <property type="entry name" value="MITOCHONDRIAL RIBOSOME PROTEIN L39/PROLYL-TRNA LIGASE FAMILY MEMBER"/>
    <property type="match status" value="1"/>
</dbReference>
<dbReference type="PANTHER" id="PTHR42753:SF2">
    <property type="entry name" value="PROLINE--TRNA LIGASE"/>
    <property type="match status" value="1"/>
</dbReference>
<dbReference type="Pfam" id="PF03129">
    <property type="entry name" value="HGTP_anticodon"/>
    <property type="match status" value="1"/>
</dbReference>
<dbReference type="Pfam" id="PF00587">
    <property type="entry name" value="tRNA-synt_2b"/>
    <property type="match status" value="1"/>
</dbReference>
<dbReference type="Pfam" id="PF04073">
    <property type="entry name" value="tRNA_edit"/>
    <property type="match status" value="1"/>
</dbReference>
<dbReference type="PIRSF" id="PIRSF001535">
    <property type="entry name" value="ProRS_1"/>
    <property type="match status" value="1"/>
</dbReference>
<dbReference type="PRINTS" id="PR01046">
    <property type="entry name" value="TRNASYNTHPRO"/>
</dbReference>
<dbReference type="SUPFAM" id="SSF52954">
    <property type="entry name" value="Class II aaRS ABD-related"/>
    <property type="match status" value="1"/>
</dbReference>
<dbReference type="SUPFAM" id="SSF55681">
    <property type="entry name" value="Class II aaRS and biotin synthetases"/>
    <property type="match status" value="1"/>
</dbReference>
<dbReference type="SUPFAM" id="SSF55826">
    <property type="entry name" value="YbaK/ProRS associated domain"/>
    <property type="match status" value="1"/>
</dbReference>
<dbReference type="PROSITE" id="PS50862">
    <property type="entry name" value="AA_TRNA_LIGASE_II"/>
    <property type="match status" value="1"/>
</dbReference>
<gene>
    <name evidence="1" type="primary">proS</name>
    <name type="ordered locus">BPSL2998</name>
</gene>
<organism>
    <name type="scientific">Burkholderia pseudomallei (strain K96243)</name>
    <dbReference type="NCBI Taxonomy" id="272560"/>
    <lineage>
        <taxon>Bacteria</taxon>
        <taxon>Pseudomonadati</taxon>
        <taxon>Pseudomonadota</taxon>
        <taxon>Betaproteobacteria</taxon>
        <taxon>Burkholderiales</taxon>
        <taxon>Burkholderiaceae</taxon>
        <taxon>Burkholderia</taxon>
        <taxon>pseudomallei group</taxon>
    </lineage>
</organism>
<proteinExistence type="inferred from homology"/>
<evidence type="ECO:0000255" key="1">
    <source>
        <dbReference type="HAMAP-Rule" id="MF_01569"/>
    </source>
</evidence>
<feature type="chain" id="PRO_0000248659" description="Proline--tRNA ligase">
    <location>
        <begin position="1"/>
        <end position="578"/>
    </location>
</feature>
<sequence>MKASRFFIGTLKEAPADAEIVSHKLMVRAGMIRRVAGGIYNYLPVGLRSIRKVEAIVREEMNRAGAIELLMPAVQPAELWQESGRWEQYGPELLRFKDRKQNEFVIGPTHEEVVTDIARNQIKSYRQMPVNFYQIQTKFRDEIRPRFGVMRGREFIMKDAYSFDKDHESLKESYKKMYDAYVRIFTRIGLEFRPVAADNGSIGGSGSHEFHVIADTGEDAIAYCPTSDFAANVEAAEALPLLASRAAPAEAMQKVATPGKAKCEAVAELMGIPLERTIKSIVLATDNEGAEPTIWLLMLRGDHDLNEIKTAKLPGLAGHRFATEAEIVEWFGTPPGYLGPIGTKKPVRVVADRTVANMSDFVVGANEVDYHIAGVNWGRDLPEPVVADIRNVKAGDPSPDGKGALDICRGIEVGHVFQLGTKYSDAMGATFIDESGKAQPMVMGCYGIGITRILGAAIEQNFDDKGIVWPEAIAPFEVVLCPMGYDRSDAVREAADKLYADLAAAGIDVILDDRGERPGVMFADWELIGVPHRLVIGERGLKDGKIEYQGRRDAEATLLPADSAAAAVAEKVRAALAR</sequence>
<name>SYP_BURPS</name>
<reference key="1">
    <citation type="journal article" date="2004" name="Proc. Natl. Acad. Sci. U.S.A.">
        <title>Genomic plasticity of the causative agent of melioidosis, Burkholderia pseudomallei.</title>
        <authorList>
            <person name="Holden M.T.G."/>
            <person name="Titball R.W."/>
            <person name="Peacock S.J."/>
            <person name="Cerdeno-Tarraga A.-M."/>
            <person name="Atkins T."/>
            <person name="Crossman L.C."/>
            <person name="Pitt T."/>
            <person name="Churcher C."/>
            <person name="Mungall K.L."/>
            <person name="Bentley S.D."/>
            <person name="Sebaihia M."/>
            <person name="Thomson N.R."/>
            <person name="Bason N."/>
            <person name="Beacham I.R."/>
            <person name="Brooks K."/>
            <person name="Brown K.A."/>
            <person name="Brown N.F."/>
            <person name="Challis G.L."/>
            <person name="Cherevach I."/>
            <person name="Chillingworth T."/>
            <person name="Cronin A."/>
            <person name="Crossett B."/>
            <person name="Davis P."/>
            <person name="DeShazer D."/>
            <person name="Feltwell T."/>
            <person name="Fraser A."/>
            <person name="Hance Z."/>
            <person name="Hauser H."/>
            <person name="Holroyd S."/>
            <person name="Jagels K."/>
            <person name="Keith K.E."/>
            <person name="Maddison M."/>
            <person name="Moule S."/>
            <person name="Price C."/>
            <person name="Quail M.A."/>
            <person name="Rabbinowitsch E."/>
            <person name="Rutherford K."/>
            <person name="Sanders M."/>
            <person name="Simmonds M."/>
            <person name="Songsivilai S."/>
            <person name="Stevens K."/>
            <person name="Tumapa S."/>
            <person name="Vesaratchavest M."/>
            <person name="Whitehead S."/>
            <person name="Yeats C."/>
            <person name="Barrell B.G."/>
            <person name="Oyston P.C.F."/>
            <person name="Parkhill J."/>
        </authorList>
    </citation>
    <scope>NUCLEOTIDE SEQUENCE [LARGE SCALE GENOMIC DNA]</scope>
    <source>
        <strain>K96243</strain>
    </source>
</reference>
<comment type="function">
    <text evidence="1">Catalyzes the attachment of proline to tRNA(Pro) in a two-step reaction: proline is first activated by ATP to form Pro-AMP and then transferred to the acceptor end of tRNA(Pro). As ProRS can inadvertently accommodate and process non-cognate amino acids such as alanine and cysteine, to avoid such errors it has two additional distinct editing activities against alanine. One activity is designated as 'pretransfer' editing and involves the tRNA(Pro)-independent hydrolysis of activated Ala-AMP. The other activity is designated 'posttransfer' editing and involves deacylation of mischarged Ala-tRNA(Pro). The misacylated Cys-tRNA(Pro) is not edited by ProRS.</text>
</comment>
<comment type="catalytic activity">
    <reaction evidence="1">
        <text>tRNA(Pro) + L-proline + ATP = L-prolyl-tRNA(Pro) + AMP + diphosphate</text>
        <dbReference type="Rhea" id="RHEA:14305"/>
        <dbReference type="Rhea" id="RHEA-COMP:9700"/>
        <dbReference type="Rhea" id="RHEA-COMP:9702"/>
        <dbReference type="ChEBI" id="CHEBI:30616"/>
        <dbReference type="ChEBI" id="CHEBI:33019"/>
        <dbReference type="ChEBI" id="CHEBI:60039"/>
        <dbReference type="ChEBI" id="CHEBI:78442"/>
        <dbReference type="ChEBI" id="CHEBI:78532"/>
        <dbReference type="ChEBI" id="CHEBI:456215"/>
        <dbReference type="EC" id="6.1.1.15"/>
    </reaction>
</comment>
<comment type="subunit">
    <text evidence="1">Homodimer.</text>
</comment>
<comment type="subcellular location">
    <subcellularLocation>
        <location evidence="1">Cytoplasm</location>
    </subcellularLocation>
</comment>
<comment type="domain">
    <text evidence="1">Consists of three domains: the N-terminal catalytic domain, the editing domain and the C-terminal anticodon-binding domain.</text>
</comment>
<comment type="similarity">
    <text evidence="1">Belongs to the class-II aminoacyl-tRNA synthetase family. ProS type 1 subfamily.</text>
</comment>
<accession>Q63QM5</accession>
<keyword id="KW-0030">Aminoacyl-tRNA synthetase</keyword>
<keyword id="KW-0067">ATP-binding</keyword>
<keyword id="KW-0963">Cytoplasm</keyword>
<keyword id="KW-0436">Ligase</keyword>
<keyword id="KW-0547">Nucleotide-binding</keyword>
<keyword id="KW-0648">Protein biosynthesis</keyword>
<keyword id="KW-1185">Reference proteome</keyword>